<dbReference type="EMBL" id="AAFI02000196">
    <property type="protein sequence ID" value="EAL61058.1"/>
    <property type="molecule type" value="Genomic_DNA"/>
</dbReference>
<dbReference type="RefSeq" id="XP_629465.1">
    <property type="nucleotide sequence ID" value="XM_629463.1"/>
</dbReference>
<dbReference type="SMR" id="Q54CS6"/>
<dbReference type="FunCoup" id="Q54CS6">
    <property type="interactions" value="1"/>
</dbReference>
<dbReference type="GlyCosmos" id="Q54CS6">
    <property type="glycosylation" value="6 sites, No reported glycans"/>
</dbReference>
<dbReference type="GlyGen" id="Q54CS6">
    <property type="glycosylation" value="6 sites"/>
</dbReference>
<dbReference type="PaxDb" id="44689-DDB0232077"/>
<dbReference type="EnsemblProtists" id="EAL61058">
    <property type="protein sequence ID" value="EAL61058"/>
    <property type="gene ID" value="DDB_G0292768"/>
</dbReference>
<dbReference type="GeneID" id="8628855"/>
<dbReference type="KEGG" id="ddi:DDB_G0292768"/>
<dbReference type="dictyBase" id="DDB_G0292768">
    <property type="gene designation" value="dcd1B"/>
</dbReference>
<dbReference type="VEuPathDB" id="AmoebaDB:DDB_G0292768"/>
<dbReference type="eggNOG" id="ENOG502RA4J">
    <property type="taxonomic scope" value="Eukaryota"/>
</dbReference>
<dbReference type="HOGENOM" id="CLU_616695_0_0_1"/>
<dbReference type="InParanoid" id="Q54CS6"/>
<dbReference type="OMA" id="HMFPELV"/>
<dbReference type="PhylomeDB" id="Q54CS6"/>
<dbReference type="PRO" id="PR:Q54CS6"/>
<dbReference type="Proteomes" id="UP000002195">
    <property type="component" value="Chromosome 6"/>
</dbReference>
<dbReference type="GO" id="GO:0005576">
    <property type="term" value="C:extracellular region"/>
    <property type="evidence" value="ECO:0007669"/>
    <property type="project" value="UniProtKB-SubCell"/>
</dbReference>
<dbReference type="Gene3D" id="3.60.60.10">
    <property type="entry name" value="Penicillin V Acylase, Chain A"/>
    <property type="match status" value="1"/>
</dbReference>
<dbReference type="InterPro" id="IPR047794">
    <property type="entry name" value="C45_proenzyme-like"/>
</dbReference>
<dbReference type="InterPro" id="IPR047803">
    <property type="entry name" value="DCD1A/B-like"/>
</dbReference>
<dbReference type="NCBIfam" id="NF040521">
    <property type="entry name" value="C45_proenzyme"/>
    <property type="match status" value="1"/>
</dbReference>
<dbReference type="PANTHER" id="PTHR35190">
    <property type="entry name" value="PROTEIN DCD1B"/>
    <property type="match status" value="1"/>
</dbReference>
<dbReference type="PANTHER" id="PTHR35190:SF2">
    <property type="entry name" value="PROTEIN DCD1B"/>
    <property type="match status" value="1"/>
</dbReference>
<name>DCD1B_DICDI</name>
<keyword id="KW-0325">Glycoprotein</keyword>
<keyword id="KW-1185">Reference proteome</keyword>
<keyword id="KW-0964">Secreted</keyword>
<keyword id="KW-0732">Signal</keyword>
<reference key="1">
    <citation type="journal article" date="2005" name="Nature">
        <title>The genome of the social amoeba Dictyostelium discoideum.</title>
        <authorList>
            <person name="Eichinger L."/>
            <person name="Pachebat J.A."/>
            <person name="Gloeckner G."/>
            <person name="Rajandream M.A."/>
            <person name="Sucgang R."/>
            <person name="Berriman M."/>
            <person name="Song J."/>
            <person name="Olsen R."/>
            <person name="Szafranski K."/>
            <person name="Xu Q."/>
            <person name="Tunggal B."/>
            <person name="Kummerfeld S."/>
            <person name="Madera M."/>
            <person name="Konfortov B.A."/>
            <person name="Rivero F."/>
            <person name="Bankier A.T."/>
            <person name="Lehmann R."/>
            <person name="Hamlin N."/>
            <person name="Davies R."/>
            <person name="Gaudet P."/>
            <person name="Fey P."/>
            <person name="Pilcher K."/>
            <person name="Chen G."/>
            <person name="Saunders D."/>
            <person name="Sodergren E.J."/>
            <person name="Davis P."/>
            <person name="Kerhornou A."/>
            <person name="Nie X."/>
            <person name="Hall N."/>
            <person name="Anjard C."/>
            <person name="Hemphill L."/>
            <person name="Bason N."/>
            <person name="Farbrother P."/>
            <person name="Desany B."/>
            <person name="Just E."/>
            <person name="Morio T."/>
            <person name="Rost R."/>
            <person name="Churcher C.M."/>
            <person name="Cooper J."/>
            <person name="Haydock S."/>
            <person name="van Driessche N."/>
            <person name="Cronin A."/>
            <person name="Goodhead I."/>
            <person name="Muzny D.M."/>
            <person name="Mourier T."/>
            <person name="Pain A."/>
            <person name="Lu M."/>
            <person name="Harper D."/>
            <person name="Lindsay R."/>
            <person name="Hauser H."/>
            <person name="James K.D."/>
            <person name="Quiles M."/>
            <person name="Madan Babu M."/>
            <person name="Saito T."/>
            <person name="Buchrieser C."/>
            <person name="Wardroper A."/>
            <person name="Felder M."/>
            <person name="Thangavelu M."/>
            <person name="Johnson D."/>
            <person name="Knights A."/>
            <person name="Loulseged H."/>
            <person name="Mungall K.L."/>
            <person name="Oliver K."/>
            <person name="Price C."/>
            <person name="Quail M.A."/>
            <person name="Urushihara H."/>
            <person name="Hernandez J."/>
            <person name="Rabbinowitsch E."/>
            <person name="Steffen D."/>
            <person name="Sanders M."/>
            <person name="Ma J."/>
            <person name="Kohara Y."/>
            <person name="Sharp S."/>
            <person name="Simmonds M.N."/>
            <person name="Spiegler S."/>
            <person name="Tivey A."/>
            <person name="Sugano S."/>
            <person name="White B."/>
            <person name="Walker D."/>
            <person name="Woodward J.R."/>
            <person name="Winckler T."/>
            <person name="Tanaka Y."/>
            <person name="Shaulsky G."/>
            <person name="Schleicher M."/>
            <person name="Weinstock G.M."/>
            <person name="Rosenthal A."/>
            <person name="Cox E.C."/>
            <person name="Chisholm R.L."/>
            <person name="Gibbs R.A."/>
            <person name="Loomis W.F."/>
            <person name="Platzer M."/>
            <person name="Kay R.R."/>
            <person name="Williams J.G."/>
            <person name="Dear P.H."/>
            <person name="Noegel A.A."/>
            <person name="Barrell B.G."/>
            <person name="Kuspa A."/>
        </authorList>
    </citation>
    <scope>NUCLEOTIDE SEQUENCE [LARGE SCALE GENOMIC DNA]</scope>
    <source>
        <strain>AX4</strain>
    </source>
</reference>
<reference key="2">
    <citation type="journal article" date="2008" name="BMC Microbiol.">
        <title>Dictyostelium transcriptional responses to Pseudomonas aeruginosa: common and specific effects from PAO1 and PA14 strains.</title>
        <authorList>
            <person name="Carilla-Latorre S."/>
            <person name="Calvo-Garrido J."/>
            <person name="Bloomfield G."/>
            <person name="Skelton J."/>
            <person name="Kay R.R."/>
            <person name="Ivens A."/>
            <person name="Martinez J.L."/>
            <person name="Escalante R."/>
        </authorList>
    </citation>
    <scope>INDUCTION [LARGE SCALE ANALYSIS]</scope>
</reference>
<reference key="3">
    <citation type="journal article" date="2008" name="BMC Genomics">
        <title>Genome-wide transcriptional changes induced by phagocytosis or growth on bacteria in Dictyostelium.</title>
        <authorList>
            <person name="Sillo A."/>
            <person name="Bloomfield G."/>
            <person name="Balest A."/>
            <person name="Balbo A."/>
            <person name="Pergolizzi B."/>
            <person name="Peracino B."/>
            <person name="Skelton J."/>
            <person name="Ivens A."/>
            <person name="Bozzaro S."/>
        </authorList>
    </citation>
    <scope>INDUCTION [LARGE SCALE ANALYSIS]</scope>
</reference>
<proteinExistence type="evidence at transcript level"/>
<evidence type="ECO:0000255" key="1"/>
<evidence type="ECO:0000256" key="2">
    <source>
        <dbReference type="SAM" id="MobiDB-lite"/>
    </source>
</evidence>
<evidence type="ECO:0000269" key="3">
    <source>
    </source>
</evidence>
<evidence type="ECO:0000269" key="4">
    <source>
    </source>
</evidence>
<evidence type="ECO:0000305" key="5"/>
<organism>
    <name type="scientific">Dictyostelium discoideum</name>
    <name type="common">Social amoeba</name>
    <dbReference type="NCBI Taxonomy" id="44689"/>
    <lineage>
        <taxon>Eukaryota</taxon>
        <taxon>Amoebozoa</taxon>
        <taxon>Evosea</taxon>
        <taxon>Eumycetozoa</taxon>
        <taxon>Dictyostelia</taxon>
        <taxon>Dictyosteliales</taxon>
        <taxon>Dictyosteliaceae</taxon>
        <taxon>Dictyostelium</taxon>
    </lineage>
</organism>
<protein>
    <recommendedName>
        <fullName>Protein dcd1B</fullName>
    </recommendedName>
    <alternativeName>
        <fullName>Acid ceramidase-like protein B</fullName>
    </alternativeName>
</protein>
<accession>Q54CS6</accession>
<feature type="signal peptide" evidence="1">
    <location>
        <begin position="1"/>
        <end position="20"/>
    </location>
</feature>
<feature type="chain" id="PRO_0000384456" description="Protein dcd1B">
    <location>
        <begin position="21"/>
        <end position="500"/>
    </location>
</feature>
<feature type="region of interest" description="Disordered" evidence="2">
    <location>
        <begin position="464"/>
        <end position="500"/>
    </location>
</feature>
<feature type="compositionally biased region" description="Low complexity" evidence="2">
    <location>
        <begin position="475"/>
        <end position="500"/>
    </location>
</feature>
<feature type="glycosylation site" description="N-linked (GlcNAc...) asparagine" evidence="1">
    <location>
        <position position="284"/>
    </location>
</feature>
<feature type="glycosylation site" description="N-linked (GlcNAc...) asparagine" evidence="1">
    <location>
        <position position="331"/>
    </location>
</feature>
<feature type="glycosylation site" description="N-linked (GlcNAc...) asparagine" evidence="1">
    <location>
        <position position="441"/>
    </location>
</feature>
<feature type="glycosylation site" description="N-linked (GlcNAc...) asparagine" evidence="1">
    <location>
        <position position="459"/>
    </location>
</feature>
<feature type="glycosylation site" description="N-linked (GlcNAc...) asparagine" evidence="1">
    <location>
        <position position="474"/>
    </location>
</feature>
<feature type="glycosylation site" description="N-linked (GlcNAc...) asparagine" evidence="1">
    <location>
        <position position="475"/>
    </location>
</feature>
<sequence length="500" mass="55725">MNLIKLFIICCLLISITVKSFEIENDIDIDFEFDNSFDQSSSSAGSGSDSYDQDKCKGKPNPYPIFNKEPIFIASTANGKLYKTGDDSNQVSILHLYGEAYEMGYAHGTLLKEQVNELIPKFMEFAEIAIKEFIKTKFALRLPEFLIKLIEEFGVNAALDYVASATEQFTPKRFFNELLGLSDSSGIPYQTLLRMHMFPELVKATCSIVGAWSEATINGGLLQVRALDWGLENPLVNYPTLIVYHPQENDGGEFSILSWTSFIGALTGYSQRTGVCEKVWLSYNGTYTHNGMPFYFILRDILQYDNSIYEALNRIYNTPRTCAVYLGVGSNESNTASLLEVSMDVVRVFDDETPFPGFAPPVPEHPLFKDVVYVDKHSQPSTDPCMANSLSQSWSEITAQTLINTMGQMETGDLHSAVYDFKQNLVYVSVATTNIPFPFTNETLPLVSPAYKNQFIQFNMTKLFSEQPPLPPPNNSSSSDSNSNSNSDSSSSSDSNSNSN</sequence>
<comment type="subcellular location">
    <subcellularLocation>
        <location evidence="5">Secreted</location>
    </subcellularLocation>
</comment>
<comment type="induction">
    <text evidence="3 4">Down-regulated by Pseudomonas aeruginosa, PAO1 strain and PA14 strain infection and down-regulated by phagocytic stimuli.</text>
</comment>
<gene>
    <name type="primary">dcd1B</name>
    <name type="ORF">DDB_G0292768</name>
</gene>